<name>KHPA_CLOAB</name>
<proteinExistence type="inferred from homology"/>
<sequence length="75" mass="8170">MKQLLETIAKSLVDCPDEVQVSEVTGEQSIILELKVAPEDMGKVIGKQGRIAKAIRTVIKAAAVKENKRVVVEII</sequence>
<organism>
    <name type="scientific">Clostridium acetobutylicum (strain ATCC 824 / DSM 792 / JCM 1419 / IAM 19013 / LMG 5710 / NBRC 13948 / NRRL B-527 / VKM B-1787 / 2291 / W)</name>
    <dbReference type="NCBI Taxonomy" id="272562"/>
    <lineage>
        <taxon>Bacteria</taxon>
        <taxon>Bacillati</taxon>
        <taxon>Bacillota</taxon>
        <taxon>Clostridia</taxon>
        <taxon>Eubacteriales</taxon>
        <taxon>Clostridiaceae</taxon>
        <taxon>Clostridium</taxon>
    </lineage>
</organism>
<feature type="chain" id="PRO_0000163222" description="RNA-binding protein KhpA">
    <location>
        <begin position="1"/>
        <end position="75"/>
    </location>
</feature>
<feature type="domain" description="KH" evidence="1">
    <location>
        <begin position="29"/>
        <end position="75"/>
    </location>
</feature>
<accession>Q97I96</accession>
<evidence type="ECO:0000255" key="1">
    <source>
        <dbReference type="HAMAP-Rule" id="MF_00088"/>
    </source>
</evidence>
<gene>
    <name evidence="1" type="primary">khpA</name>
    <name type="ordered locus">CA_C1756</name>
</gene>
<protein>
    <recommendedName>
        <fullName evidence="1">RNA-binding protein KhpA</fullName>
    </recommendedName>
    <alternativeName>
        <fullName evidence="1">KH-domain protein A</fullName>
    </alternativeName>
</protein>
<reference key="1">
    <citation type="journal article" date="2001" name="J. Bacteriol.">
        <title>Genome sequence and comparative analysis of the solvent-producing bacterium Clostridium acetobutylicum.</title>
        <authorList>
            <person name="Noelling J."/>
            <person name="Breton G."/>
            <person name="Omelchenko M.V."/>
            <person name="Makarova K.S."/>
            <person name="Zeng Q."/>
            <person name="Gibson R."/>
            <person name="Lee H.M."/>
            <person name="Dubois J."/>
            <person name="Qiu D."/>
            <person name="Hitti J."/>
            <person name="Wolf Y.I."/>
            <person name="Tatusov R.L."/>
            <person name="Sabathe F."/>
            <person name="Doucette-Stamm L.A."/>
            <person name="Soucaille P."/>
            <person name="Daly M.J."/>
            <person name="Bennett G.N."/>
            <person name="Koonin E.V."/>
            <person name="Smith D.R."/>
        </authorList>
    </citation>
    <scope>NUCLEOTIDE SEQUENCE [LARGE SCALE GENOMIC DNA]</scope>
    <source>
        <strain>ATCC 824 / DSM 792 / JCM 1419 / IAM 19013 / LMG 5710 / NBRC 13948 / NRRL B-527 / VKM B-1787 / 2291 / W</strain>
    </source>
</reference>
<dbReference type="EMBL" id="AE001437">
    <property type="protein sequence ID" value="AAK79722.1"/>
    <property type="molecule type" value="Genomic_DNA"/>
</dbReference>
<dbReference type="PIR" id="G97116">
    <property type="entry name" value="G97116"/>
</dbReference>
<dbReference type="RefSeq" id="NP_348382.1">
    <property type="nucleotide sequence ID" value="NC_003030.1"/>
</dbReference>
<dbReference type="RefSeq" id="WP_010965063.1">
    <property type="nucleotide sequence ID" value="NC_003030.1"/>
</dbReference>
<dbReference type="SMR" id="Q97I96"/>
<dbReference type="STRING" id="272562.CA_C1756"/>
<dbReference type="KEGG" id="cac:CA_C1756"/>
<dbReference type="PATRIC" id="fig|272562.8.peg.1960"/>
<dbReference type="eggNOG" id="COG1837">
    <property type="taxonomic scope" value="Bacteria"/>
</dbReference>
<dbReference type="HOGENOM" id="CLU_132074_1_0_9"/>
<dbReference type="OrthoDB" id="9812389at2"/>
<dbReference type="Proteomes" id="UP000000814">
    <property type="component" value="Chromosome"/>
</dbReference>
<dbReference type="GO" id="GO:0005737">
    <property type="term" value="C:cytoplasm"/>
    <property type="evidence" value="ECO:0007669"/>
    <property type="project" value="UniProtKB-SubCell"/>
</dbReference>
<dbReference type="GO" id="GO:0003723">
    <property type="term" value="F:RNA binding"/>
    <property type="evidence" value="ECO:0007669"/>
    <property type="project" value="UniProtKB-UniRule"/>
</dbReference>
<dbReference type="GO" id="GO:0071555">
    <property type="term" value="P:cell wall organization"/>
    <property type="evidence" value="ECO:0007669"/>
    <property type="project" value="UniProtKB-KW"/>
</dbReference>
<dbReference type="GO" id="GO:0009252">
    <property type="term" value="P:peptidoglycan biosynthetic process"/>
    <property type="evidence" value="ECO:0007669"/>
    <property type="project" value="UniProtKB-UniRule"/>
</dbReference>
<dbReference type="GO" id="GO:0008360">
    <property type="term" value="P:regulation of cell shape"/>
    <property type="evidence" value="ECO:0007669"/>
    <property type="project" value="UniProtKB-KW"/>
</dbReference>
<dbReference type="CDD" id="cd22533">
    <property type="entry name" value="KH-II_YlqC-like"/>
    <property type="match status" value="1"/>
</dbReference>
<dbReference type="Gene3D" id="3.30.300.20">
    <property type="match status" value="1"/>
</dbReference>
<dbReference type="HAMAP" id="MF_00088">
    <property type="entry name" value="KhpA"/>
    <property type="match status" value="1"/>
</dbReference>
<dbReference type="InterPro" id="IPR015946">
    <property type="entry name" value="KH_dom-like_a/b"/>
</dbReference>
<dbReference type="InterPro" id="IPR009019">
    <property type="entry name" value="KH_sf_prok-type"/>
</dbReference>
<dbReference type="InterPro" id="IPR020627">
    <property type="entry name" value="KhpA"/>
</dbReference>
<dbReference type="NCBIfam" id="NF001748">
    <property type="entry name" value="PRK00468.1"/>
    <property type="match status" value="1"/>
</dbReference>
<dbReference type="PANTHER" id="PTHR34654:SF1">
    <property type="entry name" value="RNA-BINDING PROTEIN KHPA"/>
    <property type="match status" value="1"/>
</dbReference>
<dbReference type="PANTHER" id="PTHR34654">
    <property type="entry name" value="UPF0109 PROTEIN SCO5592"/>
    <property type="match status" value="1"/>
</dbReference>
<dbReference type="Pfam" id="PF13083">
    <property type="entry name" value="KH_KhpA-B"/>
    <property type="match status" value="1"/>
</dbReference>
<dbReference type="SUPFAM" id="SSF54814">
    <property type="entry name" value="Prokaryotic type KH domain (KH-domain type II)"/>
    <property type="match status" value="1"/>
</dbReference>
<keyword id="KW-0133">Cell shape</keyword>
<keyword id="KW-0961">Cell wall biogenesis/degradation</keyword>
<keyword id="KW-0143">Chaperone</keyword>
<keyword id="KW-0963">Cytoplasm</keyword>
<keyword id="KW-1185">Reference proteome</keyword>
<keyword id="KW-0694">RNA-binding</keyword>
<comment type="function">
    <text evidence="1">A probable RNA chaperone. Forms a complex with KhpB which binds to cellular RNA and controls its expression. Plays a role in peptidoglycan (PG) homeostasis and cell length regulation.</text>
</comment>
<comment type="subunit">
    <text evidence="1">Forms a complex with KhpB.</text>
</comment>
<comment type="subcellular location">
    <subcellularLocation>
        <location evidence="1">Cytoplasm</location>
    </subcellularLocation>
</comment>
<comment type="similarity">
    <text evidence="1">Belongs to the KhpA RNA-binding protein family.</text>
</comment>